<sequence length="450" mass="49452">MIKKLLIANRGEIAVRIIRACRELGIETVAVYSEADKDALHVQMADEAFCIGPKASKDSYLNVTNIVSVAKLTGTDAIHPGYGFLAENADFAELCEEVNVTFVGPSADAISKMGTKDVARETMKQAGVPIVPGSQGIIENVEEAVSLANEIGYPVIIKATAGGGGKGIRVARTEEELINGIKITQQEAATAFGNPGVYIEKYIEDFRHVEIQVLADNYGNTIHLGERDCSIQRRLQKLLEESPSPALDSEIREQMGDAAVKAAKAVGYTGAGTVEFIYDYNEQRYYFMEMNTRIQVEHPVTEMVTGTDLIKEQIKVASGMELSLKQEDVEFEGWAIECRINAENPSKNFMPSPGEIKMYLPPGGLGVRVDSAAYPGYSIPPYYDSMIAKVITYGKTRDEAIARMKRALSEFVIEGIETTIPFHLKLLEHETFVSGEFNTKFLETYDVMGS</sequence>
<proteinExistence type="inferred from homology"/>
<dbReference type="EC" id="6.3.4.14" evidence="1"/>
<dbReference type="EMBL" id="U36245">
    <property type="protein sequence ID" value="AAB00183.1"/>
    <property type="molecule type" value="Genomic_DNA"/>
</dbReference>
<dbReference type="EMBL" id="D84432">
    <property type="protein sequence ID" value="BAA12569.1"/>
    <property type="molecule type" value="Genomic_DNA"/>
</dbReference>
<dbReference type="EMBL" id="AL009126">
    <property type="protein sequence ID" value="CAB14365.2"/>
    <property type="molecule type" value="Genomic_DNA"/>
</dbReference>
<dbReference type="PIR" id="A69581">
    <property type="entry name" value="A69581"/>
</dbReference>
<dbReference type="RefSeq" id="NP_390314.2">
    <property type="nucleotide sequence ID" value="NC_000964.3"/>
</dbReference>
<dbReference type="RefSeq" id="WP_003230253.1">
    <property type="nucleotide sequence ID" value="NZ_OZ025638.1"/>
</dbReference>
<dbReference type="SMR" id="P49787"/>
<dbReference type="FunCoup" id="P49787">
    <property type="interactions" value="704"/>
</dbReference>
<dbReference type="IntAct" id="P49787">
    <property type="interactions" value="1"/>
</dbReference>
<dbReference type="MINT" id="P49787"/>
<dbReference type="STRING" id="224308.BSU24340"/>
<dbReference type="jPOST" id="P49787"/>
<dbReference type="PaxDb" id="224308-BSU24340"/>
<dbReference type="EnsemblBacteria" id="CAB14365">
    <property type="protein sequence ID" value="CAB14365"/>
    <property type="gene ID" value="BSU_24340"/>
</dbReference>
<dbReference type="GeneID" id="86873019"/>
<dbReference type="GeneID" id="938588"/>
<dbReference type="KEGG" id="bsu:BSU24340"/>
<dbReference type="PATRIC" id="fig|224308.179.peg.2652"/>
<dbReference type="eggNOG" id="COG0439">
    <property type="taxonomic scope" value="Bacteria"/>
</dbReference>
<dbReference type="InParanoid" id="P49787"/>
<dbReference type="OrthoDB" id="9807469at2"/>
<dbReference type="PhylomeDB" id="P49787"/>
<dbReference type="BioCyc" id="BSUB:BSU24340-MONOMER"/>
<dbReference type="UniPathway" id="UPA00655">
    <property type="reaction ID" value="UER00711"/>
</dbReference>
<dbReference type="Proteomes" id="UP000001570">
    <property type="component" value="Chromosome"/>
</dbReference>
<dbReference type="GO" id="GO:0003989">
    <property type="term" value="F:acetyl-CoA carboxylase activity"/>
    <property type="evidence" value="ECO:0007669"/>
    <property type="project" value="UniProtKB-EC"/>
</dbReference>
<dbReference type="GO" id="GO:0005524">
    <property type="term" value="F:ATP binding"/>
    <property type="evidence" value="ECO:0007669"/>
    <property type="project" value="UniProtKB-KW"/>
</dbReference>
<dbReference type="GO" id="GO:0004075">
    <property type="term" value="F:biotin carboxylase activity"/>
    <property type="evidence" value="ECO:0007669"/>
    <property type="project" value="UniProtKB-EC"/>
</dbReference>
<dbReference type="GO" id="GO:0046872">
    <property type="term" value="F:metal ion binding"/>
    <property type="evidence" value="ECO:0007669"/>
    <property type="project" value="UniProtKB-KW"/>
</dbReference>
<dbReference type="GO" id="GO:0006633">
    <property type="term" value="P:fatty acid biosynthetic process"/>
    <property type="evidence" value="ECO:0007669"/>
    <property type="project" value="UniProtKB-KW"/>
</dbReference>
<dbReference type="GO" id="GO:2001295">
    <property type="term" value="P:malonyl-CoA biosynthetic process"/>
    <property type="evidence" value="ECO:0007669"/>
    <property type="project" value="UniProtKB-UniPathway"/>
</dbReference>
<dbReference type="FunFam" id="3.30.1490.20:FF:000018">
    <property type="entry name" value="Biotin carboxylase"/>
    <property type="match status" value="1"/>
</dbReference>
<dbReference type="FunFam" id="3.30.470.20:FF:000028">
    <property type="entry name" value="Methylcrotonoyl-CoA carboxylase subunit alpha, mitochondrial"/>
    <property type="match status" value="1"/>
</dbReference>
<dbReference type="FunFam" id="3.40.50.20:FF:000010">
    <property type="entry name" value="Propionyl-CoA carboxylase subunit alpha"/>
    <property type="match status" value="1"/>
</dbReference>
<dbReference type="Gene3D" id="3.30.470.20">
    <property type="entry name" value="ATP-grasp fold, B domain"/>
    <property type="match status" value="1"/>
</dbReference>
<dbReference type="InterPro" id="IPR051602">
    <property type="entry name" value="ACC_Biotin_Carboxylase"/>
</dbReference>
<dbReference type="InterPro" id="IPR004549">
    <property type="entry name" value="Acetyl_CoA_COase_biotin_COase"/>
</dbReference>
<dbReference type="InterPro" id="IPR011761">
    <property type="entry name" value="ATP-grasp"/>
</dbReference>
<dbReference type="InterPro" id="IPR005481">
    <property type="entry name" value="BC-like_N"/>
</dbReference>
<dbReference type="InterPro" id="IPR011764">
    <property type="entry name" value="Biotin_carboxylation_dom"/>
</dbReference>
<dbReference type="InterPro" id="IPR005482">
    <property type="entry name" value="Biotin_COase_C"/>
</dbReference>
<dbReference type="InterPro" id="IPR005479">
    <property type="entry name" value="CbamoylP_synth_lsu-like_ATP-bd"/>
</dbReference>
<dbReference type="InterPro" id="IPR016185">
    <property type="entry name" value="PreATP-grasp_dom_sf"/>
</dbReference>
<dbReference type="InterPro" id="IPR011054">
    <property type="entry name" value="Rudment_hybrid_motif"/>
</dbReference>
<dbReference type="NCBIfam" id="TIGR00514">
    <property type="entry name" value="accC"/>
    <property type="match status" value="1"/>
</dbReference>
<dbReference type="NCBIfam" id="NF004085">
    <property type="entry name" value="PRK05586.1"/>
    <property type="match status" value="1"/>
</dbReference>
<dbReference type="NCBIfam" id="NF006367">
    <property type="entry name" value="PRK08591.1"/>
    <property type="match status" value="1"/>
</dbReference>
<dbReference type="PANTHER" id="PTHR48095:SF2">
    <property type="entry name" value="BIOTIN CARBOXYLASE, CHLOROPLASTIC"/>
    <property type="match status" value="1"/>
</dbReference>
<dbReference type="PANTHER" id="PTHR48095">
    <property type="entry name" value="PYRUVATE CARBOXYLASE SUBUNIT A"/>
    <property type="match status" value="1"/>
</dbReference>
<dbReference type="Pfam" id="PF02785">
    <property type="entry name" value="Biotin_carb_C"/>
    <property type="match status" value="1"/>
</dbReference>
<dbReference type="Pfam" id="PF00289">
    <property type="entry name" value="Biotin_carb_N"/>
    <property type="match status" value="1"/>
</dbReference>
<dbReference type="Pfam" id="PF02786">
    <property type="entry name" value="CPSase_L_D2"/>
    <property type="match status" value="1"/>
</dbReference>
<dbReference type="SMART" id="SM00878">
    <property type="entry name" value="Biotin_carb_C"/>
    <property type="match status" value="1"/>
</dbReference>
<dbReference type="SUPFAM" id="SSF56059">
    <property type="entry name" value="Glutathione synthetase ATP-binding domain-like"/>
    <property type="match status" value="1"/>
</dbReference>
<dbReference type="SUPFAM" id="SSF52440">
    <property type="entry name" value="PreATP-grasp domain"/>
    <property type="match status" value="1"/>
</dbReference>
<dbReference type="SUPFAM" id="SSF51246">
    <property type="entry name" value="Rudiment single hybrid motif"/>
    <property type="match status" value="1"/>
</dbReference>
<dbReference type="PROSITE" id="PS50975">
    <property type="entry name" value="ATP_GRASP"/>
    <property type="match status" value="1"/>
</dbReference>
<dbReference type="PROSITE" id="PS50979">
    <property type="entry name" value="BC"/>
    <property type="match status" value="1"/>
</dbReference>
<dbReference type="PROSITE" id="PS00866">
    <property type="entry name" value="CPSASE_1"/>
    <property type="match status" value="1"/>
</dbReference>
<dbReference type="PROSITE" id="PS00867">
    <property type="entry name" value="CPSASE_2"/>
    <property type="match status" value="1"/>
</dbReference>
<feature type="chain" id="PRO_0000146789" description="Biotin carboxylase 1">
    <location>
        <begin position="1"/>
        <end position="450"/>
    </location>
</feature>
<feature type="domain" description="Biotin carboxylation">
    <location>
        <begin position="1"/>
        <end position="447"/>
    </location>
</feature>
<feature type="domain" description="ATP-grasp" evidence="2">
    <location>
        <begin position="120"/>
        <end position="318"/>
    </location>
</feature>
<feature type="active site" evidence="1">
    <location>
        <position position="293"/>
    </location>
</feature>
<feature type="binding site" evidence="1">
    <location>
        <position position="116"/>
    </location>
    <ligand>
        <name>ATP</name>
        <dbReference type="ChEBI" id="CHEBI:30616"/>
    </ligand>
</feature>
<feature type="binding site" evidence="1">
    <location>
        <position position="158"/>
    </location>
    <ligand>
        <name>ATP</name>
        <dbReference type="ChEBI" id="CHEBI:30616"/>
    </ligand>
</feature>
<feature type="binding site" evidence="1">
    <location>
        <begin position="164"/>
        <end position="165"/>
    </location>
    <ligand>
        <name>ATP</name>
        <dbReference type="ChEBI" id="CHEBI:30616"/>
    </ligand>
</feature>
<feature type="binding site" evidence="1">
    <location>
        <begin position="200"/>
        <end position="203"/>
    </location>
    <ligand>
        <name>ATP</name>
        <dbReference type="ChEBI" id="CHEBI:30616"/>
    </ligand>
</feature>
<feature type="binding site" evidence="1">
    <location>
        <position position="208"/>
    </location>
    <ligand>
        <name>ATP</name>
        <dbReference type="ChEBI" id="CHEBI:30616"/>
    </ligand>
</feature>
<feature type="binding site" evidence="1">
    <location>
        <position position="237"/>
    </location>
    <ligand>
        <name>hydrogencarbonate</name>
        <dbReference type="ChEBI" id="CHEBI:17544"/>
    </ligand>
</feature>
<feature type="binding site" evidence="1">
    <location>
        <position position="275"/>
    </location>
    <ligand>
        <name>ATP</name>
        <dbReference type="ChEBI" id="CHEBI:30616"/>
    </ligand>
</feature>
<feature type="binding site" evidence="2">
    <location>
        <position position="275"/>
    </location>
    <ligand>
        <name>Mg(2+)</name>
        <dbReference type="ChEBI" id="CHEBI:18420"/>
        <label>1</label>
    </ligand>
</feature>
<feature type="binding site" evidence="2">
    <location>
        <position position="275"/>
    </location>
    <ligand>
        <name>Mn(2+)</name>
        <dbReference type="ChEBI" id="CHEBI:29035"/>
        <label>1</label>
    </ligand>
</feature>
<feature type="binding site" evidence="1">
    <location>
        <position position="289"/>
    </location>
    <ligand>
        <name>ATP</name>
        <dbReference type="ChEBI" id="CHEBI:30616"/>
    </ligand>
</feature>
<feature type="binding site" evidence="2">
    <location>
        <position position="289"/>
    </location>
    <ligand>
        <name>Mg(2+)</name>
        <dbReference type="ChEBI" id="CHEBI:18420"/>
        <label>1</label>
    </ligand>
</feature>
<feature type="binding site" evidence="2">
    <location>
        <position position="289"/>
    </location>
    <ligand>
        <name>Mg(2+)</name>
        <dbReference type="ChEBI" id="CHEBI:18420"/>
        <label>2</label>
    </ligand>
</feature>
<feature type="binding site" evidence="2">
    <location>
        <position position="289"/>
    </location>
    <ligand>
        <name>Mn(2+)</name>
        <dbReference type="ChEBI" id="CHEBI:29035"/>
        <label>1</label>
    </ligand>
</feature>
<feature type="binding site" evidence="2">
    <location>
        <position position="289"/>
    </location>
    <ligand>
        <name>Mn(2+)</name>
        <dbReference type="ChEBI" id="CHEBI:29035"/>
        <label>2</label>
    </ligand>
</feature>
<feature type="binding site" evidence="2">
    <location>
        <position position="291"/>
    </location>
    <ligand>
        <name>Mg(2+)</name>
        <dbReference type="ChEBI" id="CHEBI:18420"/>
        <label>2</label>
    </ligand>
</feature>
<feature type="binding site" evidence="2">
    <location>
        <position position="291"/>
    </location>
    <ligand>
        <name>Mn(2+)</name>
        <dbReference type="ChEBI" id="CHEBI:29035"/>
        <label>2</label>
    </ligand>
</feature>
<feature type="binding site" evidence="1">
    <location>
        <position position="293"/>
    </location>
    <ligand>
        <name>hydrogencarbonate</name>
        <dbReference type="ChEBI" id="CHEBI:17544"/>
    </ligand>
</feature>
<feature type="binding site" evidence="1">
    <location>
        <position position="296"/>
    </location>
    <ligand>
        <name>hydrogencarbonate</name>
        <dbReference type="ChEBI" id="CHEBI:17544"/>
    </ligand>
</feature>
<feature type="binding site" evidence="1">
    <location>
        <position position="339"/>
    </location>
    <ligand>
        <name>biotin</name>
        <dbReference type="ChEBI" id="CHEBI:57586"/>
    </ligand>
</feature>
<feature type="binding site" evidence="1">
    <location>
        <position position="339"/>
    </location>
    <ligand>
        <name>hydrogencarbonate</name>
        <dbReference type="ChEBI" id="CHEBI:17544"/>
    </ligand>
</feature>
<feature type="sequence conflict" description="In Ref. 2; BAA12569." evidence="3" ref="2">
    <original>A</original>
    <variation>P</variation>
    <location>
        <position position="107"/>
    </location>
</feature>
<feature type="sequence conflict" description="In Ref. 2; BAA12569." evidence="3" ref="2">
    <original>G</original>
    <variation>R</variation>
    <location>
        <position position="193"/>
    </location>
</feature>
<feature type="sequence conflict" description="In Ref. 1; AAB00183." evidence="3" ref="1">
    <original>E</original>
    <variation>G</variation>
    <location>
        <position position="240"/>
    </location>
</feature>
<feature type="sequence conflict" description="In Ref. 1; AAB00183." evidence="3" ref="1">
    <original>D</original>
    <variation>G</variation>
    <location>
        <position position="248"/>
    </location>
</feature>
<feature type="sequence conflict" description="In Ref. 1; AAB00183." evidence="3" ref="1">
    <original>NPSKN</original>
    <variation>TQVK</variation>
    <location>
        <begin position="344"/>
        <end position="348"/>
    </location>
</feature>
<feature type="sequence conflict" description="In Ref. 1; AAB00183." evidence="3" ref="1">
    <original>KMYLPP</original>
    <variation>NVPAS</variation>
    <location>
        <begin position="357"/>
        <end position="362"/>
    </location>
</feature>
<feature type="sequence conflict" description="In Ref. 1; AAB00183." evidence="3" ref="1">
    <original>SE</original>
    <variation>QQ</variation>
    <location>
        <begin position="409"/>
        <end position="410"/>
    </location>
</feature>
<name>ACCC1_BACSU</name>
<keyword id="KW-0067">ATP-binding</keyword>
<keyword id="KW-0092">Biotin</keyword>
<keyword id="KW-0275">Fatty acid biosynthesis</keyword>
<keyword id="KW-0276">Fatty acid metabolism</keyword>
<keyword id="KW-0436">Ligase</keyword>
<keyword id="KW-0444">Lipid biosynthesis</keyword>
<keyword id="KW-0443">Lipid metabolism</keyword>
<keyword id="KW-0460">Magnesium</keyword>
<keyword id="KW-0464">Manganese</keyword>
<keyword id="KW-0479">Metal-binding</keyword>
<keyword id="KW-0547">Nucleotide-binding</keyword>
<keyword id="KW-1185">Reference proteome</keyword>
<gene>
    <name type="primary">accC1</name>
    <name type="synonym">accC</name>
    <name type="synonym">yqhX</name>
    <name type="ordered locus">BSU24340</name>
</gene>
<reference key="1">
    <citation type="journal article" date="1995" name="J. Bacteriol.">
        <title>The genes encoding the biotin carboxyl carrier protein and biotin carboxylase subunits of Bacillus subtilis acetyl coenzyme A carboxylase, the first enzyme of fatty acid synthesis.</title>
        <authorList>
            <person name="Marini P.E."/>
            <person name="Li S.J."/>
            <person name="Gardiol D."/>
            <person name="Cronan J.E. Jr."/>
            <person name="de Mendoza D."/>
        </authorList>
    </citation>
    <scope>NUCLEOTIDE SEQUENCE [GENOMIC DNA]</scope>
    <source>
        <strain>168</strain>
    </source>
</reference>
<reference key="2">
    <citation type="journal article" date="1996" name="Microbiology">
        <title>Systematic sequencing of the 283 kb 210 degrees-232 degrees region of the Bacillus subtilis genome containing the skin element and many sporulation genes.</title>
        <authorList>
            <person name="Mizuno M."/>
            <person name="Masuda S."/>
            <person name="Takemaru K."/>
            <person name="Hosono S."/>
            <person name="Sato T."/>
            <person name="Takeuchi M."/>
            <person name="Kobayashi Y."/>
        </authorList>
    </citation>
    <scope>NUCLEOTIDE SEQUENCE [GENOMIC DNA]</scope>
    <source>
        <strain>168 / JH642</strain>
    </source>
</reference>
<reference key="3">
    <citation type="journal article" date="1997" name="Nature">
        <title>The complete genome sequence of the Gram-positive bacterium Bacillus subtilis.</title>
        <authorList>
            <person name="Kunst F."/>
            <person name="Ogasawara N."/>
            <person name="Moszer I."/>
            <person name="Albertini A.M."/>
            <person name="Alloni G."/>
            <person name="Azevedo V."/>
            <person name="Bertero M.G."/>
            <person name="Bessieres P."/>
            <person name="Bolotin A."/>
            <person name="Borchert S."/>
            <person name="Borriss R."/>
            <person name="Boursier L."/>
            <person name="Brans A."/>
            <person name="Braun M."/>
            <person name="Brignell S.C."/>
            <person name="Bron S."/>
            <person name="Brouillet S."/>
            <person name="Bruschi C.V."/>
            <person name="Caldwell B."/>
            <person name="Capuano V."/>
            <person name="Carter N.M."/>
            <person name="Choi S.-K."/>
            <person name="Codani J.-J."/>
            <person name="Connerton I.F."/>
            <person name="Cummings N.J."/>
            <person name="Daniel R.A."/>
            <person name="Denizot F."/>
            <person name="Devine K.M."/>
            <person name="Duesterhoeft A."/>
            <person name="Ehrlich S.D."/>
            <person name="Emmerson P.T."/>
            <person name="Entian K.-D."/>
            <person name="Errington J."/>
            <person name="Fabret C."/>
            <person name="Ferrari E."/>
            <person name="Foulger D."/>
            <person name="Fritz C."/>
            <person name="Fujita M."/>
            <person name="Fujita Y."/>
            <person name="Fuma S."/>
            <person name="Galizzi A."/>
            <person name="Galleron N."/>
            <person name="Ghim S.-Y."/>
            <person name="Glaser P."/>
            <person name="Goffeau A."/>
            <person name="Golightly E.J."/>
            <person name="Grandi G."/>
            <person name="Guiseppi G."/>
            <person name="Guy B.J."/>
            <person name="Haga K."/>
            <person name="Haiech J."/>
            <person name="Harwood C.R."/>
            <person name="Henaut A."/>
            <person name="Hilbert H."/>
            <person name="Holsappel S."/>
            <person name="Hosono S."/>
            <person name="Hullo M.-F."/>
            <person name="Itaya M."/>
            <person name="Jones L.-M."/>
            <person name="Joris B."/>
            <person name="Karamata D."/>
            <person name="Kasahara Y."/>
            <person name="Klaerr-Blanchard M."/>
            <person name="Klein C."/>
            <person name="Kobayashi Y."/>
            <person name="Koetter P."/>
            <person name="Koningstein G."/>
            <person name="Krogh S."/>
            <person name="Kumano M."/>
            <person name="Kurita K."/>
            <person name="Lapidus A."/>
            <person name="Lardinois S."/>
            <person name="Lauber J."/>
            <person name="Lazarevic V."/>
            <person name="Lee S.-M."/>
            <person name="Levine A."/>
            <person name="Liu H."/>
            <person name="Masuda S."/>
            <person name="Mauel C."/>
            <person name="Medigue C."/>
            <person name="Medina N."/>
            <person name="Mellado R.P."/>
            <person name="Mizuno M."/>
            <person name="Moestl D."/>
            <person name="Nakai S."/>
            <person name="Noback M."/>
            <person name="Noone D."/>
            <person name="O'Reilly M."/>
            <person name="Ogawa K."/>
            <person name="Ogiwara A."/>
            <person name="Oudega B."/>
            <person name="Park S.-H."/>
            <person name="Parro V."/>
            <person name="Pohl T.M."/>
            <person name="Portetelle D."/>
            <person name="Porwollik S."/>
            <person name="Prescott A.M."/>
            <person name="Presecan E."/>
            <person name="Pujic P."/>
            <person name="Purnelle B."/>
            <person name="Rapoport G."/>
            <person name="Rey M."/>
            <person name="Reynolds S."/>
            <person name="Rieger M."/>
            <person name="Rivolta C."/>
            <person name="Rocha E."/>
            <person name="Roche B."/>
            <person name="Rose M."/>
            <person name="Sadaie Y."/>
            <person name="Sato T."/>
            <person name="Scanlan E."/>
            <person name="Schleich S."/>
            <person name="Schroeter R."/>
            <person name="Scoffone F."/>
            <person name="Sekiguchi J."/>
            <person name="Sekowska A."/>
            <person name="Seror S.J."/>
            <person name="Serror P."/>
            <person name="Shin B.-S."/>
            <person name="Soldo B."/>
            <person name="Sorokin A."/>
            <person name="Tacconi E."/>
            <person name="Takagi T."/>
            <person name="Takahashi H."/>
            <person name="Takemaru K."/>
            <person name="Takeuchi M."/>
            <person name="Tamakoshi A."/>
            <person name="Tanaka T."/>
            <person name="Terpstra P."/>
            <person name="Tognoni A."/>
            <person name="Tosato V."/>
            <person name="Uchiyama S."/>
            <person name="Vandenbol M."/>
            <person name="Vannier F."/>
            <person name="Vassarotti A."/>
            <person name="Viari A."/>
            <person name="Wambutt R."/>
            <person name="Wedler E."/>
            <person name="Wedler H."/>
            <person name="Weitzenegger T."/>
            <person name="Winters P."/>
            <person name="Wipat A."/>
            <person name="Yamamoto H."/>
            <person name="Yamane K."/>
            <person name="Yasumoto K."/>
            <person name="Yata K."/>
            <person name="Yoshida K."/>
            <person name="Yoshikawa H.-F."/>
            <person name="Zumstein E."/>
            <person name="Yoshikawa H."/>
            <person name="Danchin A."/>
        </authorList>
    </citation>
    <scope>NUCLEOTIDE SEQUENCE [LARGE SCALE GENOMIC DNA]</scope>
    <source>
        <strain>168</strain>
    </source>
</reference>
<reference key="4">
    <citation type="journal article" date="2009" name="Microbiology">
        <title>From a consortium sequence to a unified sequence: the Bacillus subtilis 168 reference genome a decade later.</title>
        <authorList>
            <person name="Barbe V."/>
            <person name="Cruveiller S."/>
            <person name="Kunst F."/>
            <person name="Lenoble P."/>
            <person name="Meurice G."/>
            <person name="Sekowska A."/>
            <person name="Vallenet D."/>
            <person name="Wang T."/>
            <person name="Moszer I."/>
            <person name="Medigue C."/>
            <person name="Danchin A."/>
        </authorList>
    </citation>
    <scope>SEQUENCE REVISION TO 107 AND 193</scope>
</reference>
<organism>
    <name type="scientific">Bacillus subtilis (strain 168)</name>
    <dbReference type="NCBI Taxonomy" id="224308"/>
    <lineage>
        <taxon>Bacteria</taxon>
        <taxon>Bacillati</taxon>
        <taxon>Bacillota</taxon>
        <taxon>Bacilli</taxon>
        <taxon>Bacillales</taxon>
        <taxon>Bacillaceae</taxon>
        <taxon>Bacillus</taxon>
    </lineage>
</organism>
<accession>P49787</accession>
<evidence type="ECO:0000250" key="1">
    <source>
        <dbReference type="UniProtKB" id="P24182"/>
    </source>
</evidence>
<evidence type="ECO:0000255" key="2">
    <source>
        <dbReference type="PROSITE-ProRule" id="PRU00409"/>
    </source>
</evidence>
<evidence type="ECO:0000305" key="3"/>
<protein>
    <recommendedName>
        <fullName>Biotin carboxylase 1</fullName>
        <ecNumber evidence="1">6.3.4.14</ecNumber>
    </recommendedName>
    <alternativeName>
        <fullName evidence="3">Acetyl-coenzyme A carboxylase biotin carboxylase subunit A 1</fullName>
    </alternativeName>
</protein>
<comment type="function">
    <text evidence="1">This protein is a component of the acetyl coenzyme A carboxylase complex; first, biotin carboxylase catalyzes the carboxylation of the carrier protein and then the transcarboxylase transfers the carboxyl group to form malonyl-CoA.</text>
</comment>
<comment type="catalytic activity">
    <reaction evidence="1">
        <text>N(6)-biotinyl-L-lysyl-[protein] + hydrogencarbonate + ATP = N(6)-carboxybiotinyl-L-lysyl-[protein] + ADP + phosphate + H(+)</text>
        <dbReference type="Rhea" id="RHEA:13501"/>
        <dbReference type="Rhea" id="RHEA-COMP:10505"/>
        <dbReference type="Rhea" id="RHEA-COMP:10506"/>
        <dbReference type="ChEBI" id="CHEBI:15378"/>
        <dbReference type="ChEBI" id="CHEBI:17544"/>
        <dbReference type="ChEBI" id="CHEBI:30616"/>
        <dbReference type="ChEBI" id="CHEBI:43474"/>
        <dbReference type="ChEBI" id="CHEBI:83144"/>
        <dbReference type="ChEBI" id="CHEBI:83145"/>
        <dbReference type="ChEBI" id="CHEBI:456216"/>
        <dbReference type="EC" id="6.3.4.14"/>
    </reaction>
</comment>
<comment type="cofactor">
    <cofactor evidence="2">
        <name>Mg(2+)</name>
        <dbReference type="ChEBI" id="CHEBI:18420"/>
    </cofactor>
    <cofactor evidence="2">
        <name>Mn(2+)</name>
        <dbReference type="ChEBI" id="CHEBI:29035"/>
    </cofactor>
    <text evidence="2">Binds 2 magnesium or manganese ions per subunit.</text>
</comment>
<comment type="pathway">
    <text evidence="1">Lipid metabolism; malonyl-CoA biosynthesis; malonyl-CoA from acetyl-CoA: step 1/1.</text>
</comment>
<comment type="subunit">
    <text evidence="1">Acetyl-CoA carboxylase is a heterohexamer of biotin carboxyl carrier protein, biotin carboxylase and the two subunits of carboxyl transferase in a 2:2 complex.</text>
</comment>
<comment type="caution">
    <text evidence="3">Leu-235 is present instead of the conserved His which is expected to bind ATP.</text>
</comment>